<feature type="signal peptide" evidence="4">
    <location>
        <begin position="1"/>
        <end position="21"/>
    </location>
</feature>
<feature type="peptide" id="PRO_0000010640" description="Gastrin-71">
    <location>
        <begin position="22"/>
        <end position="92"/>
    </location>
</feature>
<feature type="peptide" id="PRO_0000010641" description="Big gastrin">
    <location>
        <begin position="59"/>
        <end position="92"/>
    </location>
</feature>
<feature type="peptide" id="PRO_0000010642" description="Gastrin">
    <location>
        <begin position="76"/>
        <end position="92"/>
    </location>
</feature>
<feature type="propeptide" id="PRO_0000010643" evidence="1">
    <location>
        <begin position="96"/>
        <end position="101"/>
    </location>
</feature>
<feature type="region of interest" description="Disordered" evidence="5">
    <location>
        <begin position="23"/>
        <end position="101"/>
    </location>
</feature>
<feature type="compositionally biased region" description="Polar residues" evidence="5">
    <location>
        <begin position="25"/>
        <end position="37"/>
    </location>
</feature>
<feature type="compositionally biased region" description="Basic and acidic residues" evidence="5">
    <location>
        <begin position="92"/>
        <end position="101"/>
    </location>
</feature>
<feature type="modified residue" description="Sulfotyrosine" evidence="1">
    <location>
        <position position="87"/>
    </location>
</feature>
<feature type="modified residue" description="Phenylalanine amide" evidence="2">
    <location>
        <position position="92"/>
    </location>
</feature>
<feature type="modified residue" description="Phosphoserine" evidence="3">
    <location>
        <position position="96"/>
    </location>
</feature>
<feature type="sequence conflict" description="In Ref. 2; AAB06947." evidence="7" ref="2">
    <original>R</original>
    <variation>G</variation>
    <location>
        <position position="45"/>
    </location>
</feature>
<feature type="sequence conflict" description="In Ref. 1; AAB97872, 2; AAB06947 and 3; CAA64385/CAA64386." evidence="7" ref="1 2 3">
    <original>P</original>
    <variation>L</variation>
    <location>
        <position position="62"/>
    </location>
</feature>
<feature type="sequence conflict" description="In Ref. 1; AAB97872 and 2; AAB06947." evidence="7" ref="1 2">
    <original>Q</original>
    <variation>E</variation>
    <location>
        <position position="76"/>
    </location>
</feature>
<comment type="function">
    <text>Gastrin stimulates the stomach mucosa to produce and secrete hydrochloric acid and the pancreas to secrete its digestive enzymes. It also stimulates smooth muscle contraction and increases blood circulation and water secretion in the stomach and intestine.</text>
</comment>
<comment type="subcellular location">
    <subcellularLocation>
        <location>Secreted</location>
    </subcellularLocation>
</comment>
<comment type="tissue specificity">
    <text evidence="6">Abundantly expressed in the stomach and duodenum. Low levels in brain, ovary and pancreas.</text>
</comment>
<comment type="PTM">
    <text evidence="1">Sulfation enhances proteolytic processing, and blocks peptide degradation. Levels of sulfation differ between proteolytically-cleaved gastrins and between tissues (By similarity).</text>
</comment>
<comment type="similarity">
    <text evidence="7">Belongs to the gastrin/cholecystokinin family.</text>
</comment>
<name>GAST_MOUSE</name>
<accession>P48757</accession>
<accession>P70334</accession>
<accession>Q64295</accession>
<accession>Q9CPR2</accession>
<gene>
    <name type="primary">Gast</name>
    <name type="synonym">Gas</name>
</gene>
<proteinExistence type="evidence at transcript level"/>
<evidence type="ECO:0000250" key="1"/>
<evidence type="ECO:0000250" key="2">
    <source>
        <dbReference type="UniProtKB" id="P01350"/>
    </source>
</evidence>
<evidence type="ECO:0000250" key="3">
    <source>
        <dbReference type="UniProtKB" id="P01353"/>
    </source>
</evidence>
<evidence type="ECO:0000255" key="4"/>
<evidence type="ECO:0000256" key="5">
    <source>
        <dbReference type="SAM" id="MobiDB-lite"/>
    </source>
</evidence>
<evidence type="ECO:0000269" key="6">
    <source>
    </source>
</evidence>
<evidence type="ECO:0000305" key="7"/>
<reference key="1">
    <citation type="journal article" date="1995" name="Biochem. Biophys. Res. Commun.">
        <title>Molecular cloning and sequencing of the murine gastrin gene.</title>
        <authorList>
            <person name="Koh T.J."/>
            <person name="Wang T.C."/>
        </authorList>
    </citation>
    <scope>NUCLEOTIDE SEQUENCE [GENOMIC DNA]</scope>
    <source>
        <strain>129/Sv</strain>
    </source>
</reference>
<reference key="2">
    <citation type="journal article" date="1995" name="Biochem. Mol. Biol. Int.">
        <title>Sequences responsible for transcription termination of the mouse gastrin gene.</title>
        <authorList>
            <person name="Noh M.J."/>
            <person name="Kim S.J."/>
            <person name="Kang Y.K."/>
            <person name="Yoo O.J."/>
        </authorList>
    </citation>
    <scope>NUCLEOTIDE SEQUENCE [GENOMIC DNA]</scope>
    <source>
        <strain>BALB/cJ</strain>
    </source>
</reference>
<reference key="3">
    <citation type="journal article" date="1996" name="FEBS Lett.">
        <title>Molecular structure and genetic mapping of the mouse gastrin gene.</title>
        <authorList>
            <person name="Friis-Hansen L."/>
            <person name="Rourke I.J."/>
            <person name="Bundgaard J.R."/>
            <person name="Rehfeld J.F."/>
            <person name="Samuelson L.C."/>
        </authorList>
    </citation>
    <scope>NUCLEOTIDE SEQUENCE [GENOMIC DNA / MRNA]</scope>
    <scope>TISSUE SPECIFICITY</scope>
    <source>
        <strain>129/SvJ</strain>
        <tissue>Stomach</tissue>
    </source>
</reference>
<reference key="4">
    <citation type="journal article" date="2005" name="Science">
        <title>The transcriptional landscape of the mammalian genome.</title>
        <authorList>
            <person name="Carninci P."/>
            <person name="Kasukawa T."/>
            <person name="Katayama S."/>
            <person name="Gough J."/>
            <person name="Frith M.C."/>
            <person name="Maeda N."/>
            <person name="Oyama R."/>
            <person name="Ravasi T."/>
            <person name="Lenhard B."/>
            <person name="Wells C."/>
            <person name="Kodzius R."/>
            <person name="Shimokawa K."/>
            <person name="Bajic V.B."/>
            <person name="Brenner S.E."/>
            <person name="Batalov S."/>
            <person name="Forrest A.R."/>
            <person name="Zavolan M."/>
            <person name="Davis M.J."/>
            <person name="Wilming L.G."/>
            <person name="Aidinis V."/>
            <person name="Allen J.E."/>
            <person name="Ambesi-Impiombato A."/>
            <person name="Apweiler R."/>
            <person name="Aturaliya R.N."/>
            <person name="Bailey T.L."/>
            <person name="Bansal M."/>
            <person name="Baxter L."/>
            <person name="Beisel K.W."/>
            <person name="Bersano T."/>
            <person name="Bono H."/>
            <person name="Chalk A.M."/>
            <person name="Chiu K.P."/>
            <person name="Choudhary V."/>
            <person name="Christoffels A."/>
            <person name="Clutterbuck D.R."/>
            <person name="Crowe M.L."/>
            <person name="Dalla E."/>
            <person name="Dalrymple B.P."/>
            <person name="de Bono B."/>
            <person name="Della Gatta G."/>
            <person name="di Bernardo D."/>
            <person name="Down T."/>
            <person name="Engstrom P."/>
            <person name="Fagiolini M."/>
            <person name="Faulkner G."/>
            <person name="Fletcher C.F."/>
            <person name="Fukushima T."/>
            <person name="Furuno M."/>
            <person name="Futaki S."/>
            <person name="Gariboldi M."/>
            <person name="Georgii-Hemming P."/>
            <person name="Gingeras T.R."/>
            <person name="Gojobori T."/>
            <person name="Green R.E."/>
            <person name="Gustincich S."/>
            <person name="Harbers M."/>
            <person name="Hayashi Y."/>
            <person name="Hensch T.K."/>
            <person name="Hirokawa N."/>
            <person name="Hill D."/>
            <person name="Huminiecki L."/>
            <person name="Iacono M."/>
            <person name="Ikeo K."/>
            <person name="Iwama A."/>
            <person name="Ishikawa T."/>
            <person name="Jakt M."/>
            <person name="Kanapin A."/>
            <person name="Katoh M."/>
            <person name="Kawasawa Y."/>
            <person name="Kelso J."/>
            <person name="Kitamura H."/>
            <person name="Kitano H."/>
            <person name="Kollias G."/>
            <person name="Krishnan S.P."/>
            <person name="Kruger A."/>
            <person name="Kummerfeld S.K."/>
            <person name="Kurochkin I.V."/>
            <person name="Lareau L.F."/>
            <person name="Lazarevic D."/>
            <person name="Lipovich L."/>
            <person name="Liu J."/>
            <person name="Liuni S."/>
            <person name="McWilliam S."/>
            <person name="Madan Babu M."/>
            <person name="Madera M."/>
            <person name="Marchionni L."/>
            <person name="Matsuda H."/>
            <person name="Matsuzawa S."/>
            <person name="Miki H."/>
            <person name="Mignone F."/>
            <person name="Miyake S."/>
            <person name="Morris K."/>
            <person name="Mottagui-Tabar S."/>
            <person name="Mulder N."/>
            <person name="Nakano N."/>
            <person name="Nakauchi H."/>
            <person name="Ng P."/>
            <person name="Nilsson R."/>
            <person name="Nishiguchi S."/>
            <person name="Nishikawa S."/>
            <person name="Nori F."/>
            <person name="Ohara O."/>
            <person name="Okazaki Y."/>
            <person name="Orlando V."/>
            <person name="Pang K.C."/>
            <person name="Pavan W.J."/>
            <person name="Pavesi G."/>
            <person name="Pesole G."/>
            <person name="Petrovsky N."/>
            <person name="Piazza S."/>
            <person name="Reed J."/>
            <person name="Reid J.F."/>
            <person name="Ring B.Z."/>
            <person name="Ringwald M."/>
            <person name="Rost B."/>
            <person name="Ruan Y."/>
            <person name="Salzberg S.L."/>
            <person name="Sandelin A."/>
            <person name="Schneider C."/>
            <person name="Schoenbach C."/>
            <person name="Sekiguchi K."/>
            <person name="Semple C.A."/>
            <person name="Seno S."/>
            <person name="Sessa L."/>
            <person name="Sheng Y."/>
            <person name="Shibata Y."/>
            <person name="Shimada H."/>
            <person name="Shimada K."/>
            <person name="Silva D."/>
            <person name="Sinclair B."/>
            <person name="Sperling S."/>
            <person name="Stupka E."/>
            <person name="Sugiura K."/>
            <person name="Sultana R."/>
            <person name="Takenaka Y."/>
            <person name="Taki K."/>
            <person name="Tammoja K."/>
            <person name="Tan S.L."/>
            <person name="Tang S."/>
            <person name="Taylor M.S."/>
            <person name="Tegner J."/>
            <person name="Teichmann S.A."/>
            <person name="Ueda H.R."/>
            <person name="van Nimwegen E."/>
            <person name="Verardo R."/>
            <person name="Wei C.L."/>
            <person name="Yagi K."/>
            <person name="Yamanishi H."/>
            <person name="Zabarovsky E."/>
            <person name="Zhu S."/>
            <person name="Zimmer A."/>
            <person name="Hide W."/>
            <person name="Bult C."/>
            <person name="Grimmond S.M."/>
            <person name="Teasdale R.D."/>
            <person name="Liu E.T."/>
            <person name="Brusic V."/>
            <person name="Quackenbush J."/>
            <person name="Wahlestedt C."/>
            <person name="Mattick J.S."/>
            <person name="Hume D.A."/>
            <person name="Kai C."/>
            <person name="Sasaki D."/>
            <person name="Tomaru Y."/>
            <person name="Fukuda S."/>
            <person name="Kanamori-Katayama M."/>
            <person name="Suzuki M."/>
            <person name="Aoki J."/>
            <person name="Arakawa T."/>
            <person name="Iida J."/>
            <person name="Imamura K."/>
            <person name="Itoh M."/>
            <person name="Kato T."/>
            <person name="Kawaji H."/>
            <person name="Kawagashira N."/>
            <person name="Kawashima T."/>
            <person name="Kojima M."/>
            <person name="Kondo S."/>
            <person name="Konno H."/>
            <person name="Nakano K."/>
            <person name="Ninomiya N."/>
            <person name="Nishio T."/>
            <person name="Okada M."/>
            <person name="Plessy C."/>
            <person name="Shibata K."/>
            <person name="Shiraki T."/>
            <person name="Suzuki S."/>
            <person name="Tagami M."/>
            <person name="Waki K."/>
            <person name="Watahiki A."/>
            <person name="Okamura-Oho Y."/>
            <person name="Suzuki H."/>
            <person name="Kawai J."/>
            <person name="Hayashizaki Y."/>
        </authorList>
    </citation>
    <scope>NUCLEOTIDE SEQUENCE [LARGE SCALE MRNA]</scope>
    <source>
        <strain>C57BL/6J</strain>
        <tissue>Small intestine</tissue>
        <tissue>Stomach</tissue>
    </source>
</reference>
<reference key="5">
    <citation type="journal article" date="2009" name="PLoS Biol.">
        <title>Lineage-specific biology revealed by a finished genome assembly of the mouse.</title>
        <authorList>
            <person name="Church D.M."/>
            <person name="Goodstadt L."/>
            <person name="Hillier L.W."/>
            <person name="Zody M.C."/>
            <person name="Goldstein S."/>
            <person name="She X."/>
            <person name="Bult C.J."/>
            <person name="Agarwala R."/>
            <person name="Cherry J.L."/>
            <person name="DiCuccio M."/>
            <person name="Hlavina W."/>
            <person name="Kapustin Y."/>
            <person name="Meric P."/>
            <person name="Maglott D."/>
            <person name="Birtle Z."/>
            <person name="Marques A.C."/>
            <person name="Graves T."/>
            <person name="Zhou S."/>
            <person name="Teague B."/>
            <person name="Potamousis K."/>
            <person name="Churas C."/>
            <person name="Place M."/>
            <person name="Herschleb J."/>
            <person name="Runnheim R."/>
            <person name="Forrest D."/>
            <person name="Amos-Landgraf J."/>
            <person name="Schwartz D.C."/>
            <person name="Cheng Z."/>
            <person name="Lindblad-Toh K."/>
            <person name="Eichler E.E."/>
            <person name="Ponting C.P."/>
        </authorList>
    </citation>
    <scope>NUCLEOTIDE SEQUENCE [LARGE SCALE GENOMIC DNA]</scope>
    <source>
        <strain>C57BL/6J</strain>
    </source>
</reference>
<keyword id="KW-0027">Amidation</keyword>
<keyword id="KW-0165">Cleavage on pair of basic residues</keyword>
<keyword id="KW-0372">Hormone</keyword>
<keyword id="KW-0597">Phosphoprotein</keyword>
<keyword id="KW-1185">Reference proteome</keyword>
<keyword id="KW-0964">Secreted</keyword>
<keyword id="KW-0732">Signal</keyword>
<keyword id="KW-0765">Sulfation</keyword>
<protein>
    <recommendedName>
        <fullName>Gastrin</fullName>
    </recommendedName>
    <component>
        <recommendedName>
            <fullName>Gastrin-71</fullName>
            <shortName>G71</shortName>
        </recommendedName>
    </component>
    <component>
        <recommendedName>
            <fullName>Big gastrin</fullName>
        </recommendedName>
        <alternativeName>
            <fullName>Gastrin-34</fullName>
            <shortName>G34</shortName>
        </alternativeName>
    </component>
    <component>
        <recommendedName>
            <fullName>Gastrin</fullName>
        </recommendedName>
    </component>
</protein>
<organism>
    <name type="scientific">Mus musculus</name>
    <name type="common">Mouse</name>
    <dbReference type="NCBI Taxonomy" id="10090"/>
    <lineage>
        <taxon>Eukaryota</taxon>
        <taxon>Metazoa</taxon>
        <taxon>Chordata</taxon>
        <taxon>Craniata</taxon>
        <taxon>Vertebrata</taxon>
        <taxon>Euteleostomi</taxon>
        <taxon>Mammalia</taxon>
        <taxon>Eutheria</taxon>
        <taxon>Euarchontoglires</taxon>
        <taxon>Glires</taxon>
        <taxon>Rodentia</taxon>
        <taxon>Myomorpha</taxon>
        <taxon>Muroidea</taxon>
        <taxon>Muridae</taxon>
        <taxon>Murinae</taxon>
        <taxon>Mus</taxon>
        <taxon>Mus</taxon>
    </lineage>
</organism>
<sequence length="101" mass="11590">MPRLCVYMLVLVLALATFSEASWKPRSQLQDASSGPGTNEDLEQRQFNKLGSASHHRRQLGPQGPQHFIADLSKKQRPRMEEEEEAYGWMDFGRRSAEEDQ</sequence>
<dbReference type="EMBL" id="U34293">
    <property type="protein sequence ID" value="AAB97872.1"/>
    <property type="molecule type" value="Genomic_DNA"/>
</dbReference>
<dbReference type="EMBL" id="U58136">
    <property type="protein sequence ID" value="AAB06947.1"/>
    <property type="molecule type" value="Genomic_DNA"/>
</dbReference>
<dbReference type="EMBL" id="X94760">
    <property type="protein sequence ID" value="CAA64386.1"/>
    <property type="molecule type" value="Genomic_DNA"/>
</dbReference>
<dbReference type="EMBL" id="X94758">
    <property type="protein sequence ID" value="CAA64385.1"/>
    <property type="molecule type" value="mRNA"/>
</dbReference>
<dbReference type="EMBL" id="AK008062">
    <property type="protein sequence ID" value="BAB25437.1"/>
    <property type="molecule type" value="mRNA"/>
</dbReference>
<dbReference type="EMBL" id="AK008159">
    <property type="protein sequence ID" value="BAB25501.1"/>
    <property type="molecule type" value="mRNA"/>
</dbReference>
<dbReference type="EMBL" id="AK008313">
    <property type="protein sequence ID" value="BAB25596.1"/>
    <property type="molecule type" value="mRNA"/>
</dbReference>
<dbReference type="EMBL" id="AK008420">
    <property type="protein sequence ID" value="BAB25658.1"/>
    <property type="molecule type" value="mRNA"/>
</dbReference>
<dbReference type="EMBL" id="AK008494">
    <property type="protein sequence ID" value="BAB25699.1"/>
    <property type="molecule type" value="mRNA"/>
</dbReference>
<dbReference type="EMBL" id="AK008649">
    <property type="protein sequence ID" value="BAB25807.1"/>
    <property type="molecule type" value="mRNA"/>
</dbReference>
<dbReference type="EMBL" id="AL590968">
    <property type="status" value="NOT_ANNOTATED_CDS"/>
    <property type="molecule type" value="Genomic_DNA"/>
</dbReference>
<dbReference type="CCDS" id="CCDS25418.1"/>
<dbReference type="PIR" id="S68861">
    <property type="entry name" value="S68861"/>
</dbReference>
<dbReference type="RefSeq" id="NP_034387.3">
    <property type="nucleotide sequence ID" value="NM_010257.4"/>
</dbReference>
<dbReference type="FunCoup" id="P48757">
    <property type="interactions" value="373"/>
</dbReference>
<dbReference type="STRING" id="10090.ENSMUSP00000017309"/>
<dbReference type="PhosphoSitePlus" id="P48757"/>
<dbReference type="PaxDb" id="10090-ENSMUSP00000017309"/>
<dbReference type="ProteomicsDB" id="271671"/>
<dbReference type="Antibodypedia" id="3504">
    <property type="antibodies" value="495 antibodies from 36 providers"/>
</dbReference>
<dbReference type="Ensembl" id="ENSMUST00000017309.2">
    <property type="protein sequence ID" value="ENSMUSP00000017309.2"/>
    <property type="gene ID" value="ENSMUSG00000017165.2"/>
</dbReference>
<dbReference type="GeneID" id="14459"/>
<dbReference type="KEGG" id="mmu:14459"/>
<dbReference type="UCSC" id="uc007lkw.2">
    <property type="organism name" value="mouse"/>
</dbReference>
<dbReference type="AGR" id="MGI:104768"/>
<dbReference type="CTD" id="2520"/>
<dbReference type="MGI" id="MGI:104768">
    <property type="gene designation" value="Gast"/>
</dbReference>
<dbReference type="VEuPathDB" id="HostDB:ENSMUSG00000017165"/>
<dbReference type="eggNOG" id="ENOG502SA9S">
    <property type="taxonomic scope" value="Eukaryota"/>
</dbReference>
<dbReference type="GeneTree" id="ENSGT00390000014792"/>
<dbReference type="HOGENOM" id="CLU_2249245_0_0_1"/>
<dbReference type="InParanoid" id="P48757"/>
<dbReference type="OMA" id="WKPRSQL"/>
<dbReference type="OrthoDB" id="9924917at2759"/>
<dbReference type="PhylomeDB" id="P48757"/>
<dbReference type="TreeFam" id="TF336994"/>
<dbReference type="Reactome" id="R-MMU-416476">
    <property type="pathway name" value="G alpha (q) signalling events"/>
</dbReference>
<dbReference type="Reactome" id="R-MMU-881907">
    <property type="pathway name" value="Gastrin-CREB signalling pathway via PKC and MAPK"/>
</dbReference>
<dbReference type="BioGRID-ORCS" id="14459">
    <property type="hits" value="2 hits in 79 CRISPR screens"/>
</dbReference>
<dbReference type="ChiTaRS" id="Gast">
    <property type="organism name" value="mouse"/>
</dbReference>
<dbReference type="PRO" id="PR:P48757"/>
<dbReference type="Proteomes" id="UP000000589">
    <property type="component" value="Chromosome 11"/>
</dbReference>
<dbReference type="RNAct" id="P48757">
    <property type="molecule type" value="protein"/>
</dbReference>
<dbReference type="Bgee" id="ENSMUSG00000017165">
    <property type="expression patterns" value="Expressed in pyloric antrum and 42 other cell types or tissues"/>
</dbReference>
<dbReference type="GO" id="GO:0005576">
    <property type="term" value="C:extracellular region"/>
    <property type="evidence" value="ECO:0007669"/>
    <property type="project" value="UniProtKB-SubCell"/>
</dbReference>
<dbReference type="GO" id="GO:0005179">
    <property type="term" value="F:hormone activity"/>
    <property type="evidence" value="ECO:0007669"/>
    <property type="project" value="UniProtKB-KW"/>
</dbReference>
<dbReference type="GO" id="GO:0007186">
    <property type="term" value="P:G protein-coupled receptor signaling pathway"/>
    <property type="evidence" value="ECO:0007669"/>
    <property type="project" value="Ensembl"/>
</dbReference>
<dbReference type="InterPro" id="IPR039236">
    <property type="entry name" value="GAST"/>
</dbReference>
<dbReference type="InterPro" id="IPR001651">
    <property type="entry name" value="Gastrin/CCK"/>
</dbReference>
<dbReference type="InterPro" id="IPR013152">
    <property type="entry name" value="Gastrin/cholecystokinin_CS"/>
</dbReference>
<dbReference type="PANTHER" id="PTHR19309">
    <property type="entry name" value="GASTRIN"/>
    <property type="match status" value="1"/>
</dbReference>
<dbReference type="PANTHER" id="PTHR19309:SF0">
    <property type="entry name" value="GASTRIN"/>
    <property type="match status" value="1"/>
</dbReference>
<dbReference type="Pfam" id="PF00918">
    <property type="entry name" value="Gastrin"/>
    <property type="match status" value="1"/>
</dbReference>
<dbReference type="SMART" id="SM00029">
    <property type="entry name" value="GASTRIN"/>
    <property type="match status" value="1"/>
</dbReference>
<dbReference type="PROSITE" id="PS00259">
    <property type="entry name" value="GASTRIN"/>
    <property type="match status" value="1"/>
</dbReference>